<gene>
    <name evidence="1" type="primary">purN</name>
    <name type="ordered locus">SACOL1081</name>
</gene>
<evidence type="ECO:0000255" key="1">
    <source>
        <dbReference type="HAMAP-Rule" id="MF_01930"/>
    </source>
</evidence>
<sequence>MVKIAIFASGSGSNFENIVEHVESGKLENIEVTALYTDHQNAFCIDRAKKHDIPVYINEPKQFDSKAAYEQHLVTLLNEDKVEWIILAGYMRLIGPDLLASFEGKILNIHPSLLPKYKGIDAIGQAYHSGDTITGSTVHYVDSGMDTGEIIEQRKCDIRPDDSKEQLEEKVKKLEYELYPSVIAKIVK</sequence>
<feature type="chain" id="PRO_0000074945" description="Phosphoribosylglycinamide formyltransferase">
    <location>
        <begin position="1"/>
        <end position="188"/>
    </location>
</feature>
<feature type="active site" description="Proton donor" evidence="1">
    <location>
        <position position="110"/>
    </location>
</feature>
<feature type="binding site" evidence="1">
    <location>
        <begin position="12"/>
        <end position="14"/>
    </location>
    <ligand>
        <name>N(1)-(5-phospho-beta-D-ribosyl)glycinamide</name>
        <dbReference type="ChEBI" id="CHEBI:143788"/>
    </ligand>
</feature>
<feature type="binding site" evidence="1">
    <location>
        <position position="66"/>
    </location>
    <ligand>
        <name>(6R)-10-formyltetrahydrofolate</name>
        <dbReference type="ChEBI" id="CHEBI:195366"/>
    </ligand>
</feature>
<feature type="binding site" evidence="1">
    <location>
        <begin position="91"/>
        <end position="94"/>
    </location>
    <ligand>
        <name>(6R)-10-formyltetrahydrofolate</name>
        <dbReference type="ChEBI" id="CHEBI:195366"/>
    </ligand>
</feature>
<feature type="binding site" evidence="1">
    <location>
        <position position="108"/>
    </location>
    <ligand>
        <name>(6R)-10-formyltetrahydrofolate</name>
        <dbReference type="ChEBI" id="CHEBI:195366"/>
    </ligand>
</feature>
<feature type="site" description="Raises pKa of active site His" evidence="1">
    <location>
        <position position="146"/>
    </location>
</feature>
<comment type="function">
    <text evidence="1">Catalyzes the transfer of a formyl group from 10-formyltetrahydrofolate to 5-phospho-ribosyl-glycinamide (GAR), producing 5-phospho-ribosyl-N-formylglycinamide (FGAR) and tetrahydrofolate.</text>
</comment>
<comment type="catalytic activity">
    <reaction evidence="1">
        <text>N(1)-(5-phospho-beta-D-ribosyl)glycinamide + (6R)-10-formyltetrahydrofolate = N(2)-formyl-N(1)-(5-phospho-beta-D-ribosyl)glycinamide + (6S)-5,6,7,8-tetrahydrofolate + H(+)</text>
        <dbReference type="Rhea" id="RHEA:15053"/>
        <dbReference type="ChEBI" id="CHEBI:15378"/>
        <dbReference type="ChEBI" id="CHEBI:57453"/>
        <dbReference type="ChEBI" id="CHEBI:143788"/>
        <dbReference type="ChEBI" id="CHEBI:147286"/>
        <dbReference type="ChEBI" id="CHEBI:195366"/>
        <dbReference type="EC" id="2.1.2.2"/>
    </reaction>
</comment>
<comment type="pathway">
    <text evidence="1">Purine metabolism; IMP biosynthesis via de novo pathway; N(2)-formyl-N(1)-(5-phospho-D-ribosyl)glycinamide from N(1)-(5-phospho-D-ribosyl)glycinamide (10-formyl THF route): step 1/1.</text>
</comment>
<comment type="similarity">
    <text evidence="1">Belongs to the GART family.</text>
</comment>
<keyword id="KW-0658">Purine biosynthesis</keyword>
<keyword id="KW-0808">Transferase</keyword>
<proteinExistence type="inferred from homology"/>
<organism>
    <name type="scientific">Staphylococcus aureus (strain COL)</name>
    <dbReference type="NCBI Taxonomy" id="93062"/>
    <lineage>
        <taxon>Bacteria</taxon>
        <taxon>Bacillati</taxon>
        <taxon>Bacillota</taxon>
        <taxon>Bacilli</taxon>
        <taxon>Bacillales</taxon>
        <taxon>Staphylococcaceae</taxon>
        <taxon>Staphylococcus</taxon>
    </lineage>
</organism>
<dbReference type="EC" id="2.1.2.2" evidence="1"/>
<dbReference type="EMBL" id="CP000046">
    <property type="protein sequence ID" value="AAW37961.1"/>
    <property type="molecule type" value="Genomic_DNA"/>
</dbReference>
<dbReference type="RefSeq" id="WP_000238664.1">
    <property type="nucleotide sequence ID" value="NZ_JBGOFO010000002.1"/>
</dbReference>
<dbReference type="SMR" id="Q5HH12"/>
<dbReference type="KEGG" id="sac:SACOL1081"/>
<dbReference type="HOGENOM" id="CLU_038395_1_3_9"/>
<dbReference type="UniPathway" id="UPA00074">
    <property type="reaction ID" value="UER00126"/>
</dbReference>
<dbReference type="Proteomes" id="UP000000530">
    <property type="component" value="Chromosome"/>
</dbReference>
<dbReference type="GO" id="GO:0005829">
    <property type="term" value="C:cytosol"/>
    <property type="evidence" value="ECO:0007669"/>
    <property type="project" value="TreeGrafter"/>
</dbReference>
<dbReference type="GO" id="GO:0004644">
    <property type="term" value="F:phosphoribosylglycinamide formyltransferase activity"/>
    <property type="evidence" value="ECO:0007669"/>
    <property type="project" value="UniProtKB-UniRule"/>
</dbReference>
<dbReference type="GO" id="GO:0006189">
    <property type="term" value="P:'de novo' IMP biosynthetic process"/>
    <property type="evidence" value="ECO:0007669"/>
    <property type="project" value="UniProtKB-UniRule"/>
</dbReference>
<dbReference type="CDD" id="cd08645">
    <property type="entry name" value="FMT_core_GART"/>
    <property type="match status" value="1"/>
</dbReference>
<dbReference type="FunFam" id="3.40.50.170:FF:000014">
    <property type="entry name" value="Phosphoribosylglycinamide formyltransferase"/>
    <property type="match status" value="1"/>
</dbReference>
<dbReference type="Gene3D" id="3.40.50.170">
    <property type="entry name" value="Formyl transferase, N-terminal domain"/>
    <property type="match status" value="1"/>
</dbReference>
<dbReference type="HAMAP" id="MF_01930">
    <property type="entry name" value="PurN"/>
    <property type="match status" value="1"/>
</dbReference>
<dbReference type="InterPro" id="IPR002376">
    <property type="entry name" value="Formyl_transf_N"/>
</dbReference>
<dbReference type="InterPro" id="IPR036477">
    <property type="entry name" value="Formyl_transf_N_sf"/>
</dbReference>
<dbReference type="InterPro" id="IPR004607">
    <property type="entry name" value="GART"/>
</dbReference>
<dbReference type="NCBIfam" id="TIGR00639">
    <property type="entry name" value="PurN"/>
    <property type="match status" value="1"/>
</dbReference>
<dbReference type="PANTHER" id="PTHR43369">
    <property type="entry name" value="PHOSPHORIBOSYLGLYCINAMIDE FORMYLTRANSFERASE"/>
    <property type="match status" value="1"/>
</dbReference>
<dbReference type="PANTHER" id="PTHR43369:SF2">
    <property type="entry name" value="PHOSPHORIBOSYLGLYCINAMIDE FORMYLTRANSFERASE"/>
    <property type="match status" value="1"/>
</dbReference>
<dbReference type="Pfam" id="PF00551">
    <property type="entry name" value="Formyl_trans_N"/>
    <property type="match status" value="1"/>
</dbReference>
<dbReference type="SUPFAM" id="SSF53328">
    <property type="entry name" value="Formyltransferase"/>
    <property type="match status" value="1"/>
</dbReference>
<accession>Q5HH12</accession>
<protein>
    <recommendedName>
        <fullName evidence="1">Phosphoribosylglycinamide formyltransferase</fullName>
        <ecNumber evidence="1">2.1.2.2</ecNumber>
    </recommendedName>
    <alternativeName>
        <fullName evidence="1">5'-phosphoribosylglycinamide transformylase</fullName>
    </alternativeName>
    <alternativeName>
        <fullName evidence="1">GAR transformylase</fullName>
        <shortName evidence="1">GART</shortName>
    </alternativeName>
</protein>
<reference key="1">
    <citation type="journal article" date="2005" name="J. Bacteriol.">
        <title>Insights on evolution of virulence and resistance from the complete genome analysis of an early methicillin-resistant Staphylococcus aureus strain and a biofilm-producing methicillin-resistant Staphylococcus epidermidis strain.</title>
        <authorList>
            <person name="Gill S.R."/>
            <person name="Fouts D.E."/>
            <person name="Archer G.L."/>
            <person name="Mongodin E.F."/>
            <person name="DeBoy R.T."/>
            <person name="Ravel J."/>
            <person name="Paulsen I.T."/>
            <person name="Kolonay J.F."/>
            <person name="Brinkac L.M."/>
            <person name="Beanan M.J."/>
            <person name="Dodson R.J."/>
            <person name="Daugherty S.C."/>
            <person name="Madupu R."/>
            <person name="Angiuoli S.V."/>
            <person name="Durkin A.S."/>
            <person name="Haft D.H."/>
            <person name="Vamathevan J.J."/>
            <person name="Khouri H."/>
            <person name="Utterback T.R."/>
            <person name="Lee C."/>
            <person name="Dimitrov G."/>
            <person name="Jiang L."/>
            <person name="Qin H."/>
            <person name="Weidman J."/>
            <person name="Tran K."/>
            <person name="Kang K.H."/>
            <person name="Hance I.R."/>
            <person name="Nelson K.E."/>
            <person name="Fraser C.M."/>
        </authorList>
    </citation>
    <scope>NUCLEOTIDE SEQUENCE [LARGE SCALE GENOMIC DNA]</scope>
    <source>
        <strain>COL</strain>
    </source>
</reference>
<name>PUR3_STAAC</name>